<accession>Q1J9U0</accession>
<organism>
    <name type="scientific">Streptococcus pyogenes serotype M12 (strain MGAS2096)</name>
    <dbReference type="NCBI Taxonomy" id="370553"/>
    <lineage>
        <taxon>Bacteria</taxon>
        <taxon>Bacillati</taxon>
        <taxon>Bacillota</taxon>
        <taxon>Bacilli</taxon>
        <taxon>Lactobacillales</taxon>
        <taxon>Streptococcaceae</taxon>
        <taxon>Streptococcus</taxon>
    </lineage>
</organism>
<feature type="chain" id="PRO_1000051340" description="Small ribosomal subunit protein uS9">
    <location>
        <begin position="1"/>
        <end position="130"/>
    </location>
</feature>
<proteinExistence type="inferred from homology"/>
<name>RS9_STRPB</name>
<comment type="similarity">
    <text evidence="1">Belongs to the universal ribosomal protein uS9 family.</text>
</comment>
<sequence>MAQAQYAGTGRRKNAVARVRLVPGTGKITVNKKDVEEYIPHADLRLIINQPFAVTSTEGSYDVFVNVVGGGYGGQSGAIRHGIARALLQVDPDFRDSLKRAGLLTRDARMVERKKPGLKKARKASQFSKR</sequence>
<gene>
    <name evidence="1" type="primary">rpsI</name>
    <name type="ordered locus">MGAS2096_Spy1669</name>
</gene>
<keyword id="KW-0687">Ribonucleoprotein</keyword>
<keyword id="KW-0689">Ribosomal protein</keyword>
<dbReference type="EMBL" id="CP000261">
    <property type="protein sequence ID" value="ABF36721.1"/>
    <property type="molecule type" value="Genomic_DNA"/>
</dbReference>
<dbReference type="SMR" id="Q1J9U0"/>
<dbReference type="KEGG" id="spj:MGAS2096_Spy1669"/>
<dbReference type="HOGENOM" id="CLU_046483_2_1_9"/>
<dbReference type="GO" id="GO:0022627">
    <property type="term" value="C:cytosolic small ribosomal subunit"/>
    <property type="evidence" value="ECO:0007669"/>
    <property type="project" value="TreeGrafter"/>
</dbReference>
<dbReference type="GO" id="GO:0003723">
    <property type="term" value="F:RNA binding"/>
    <property type="evidence" value="ECO:0007669"/>
    <property type="project" value="TreeGrafter"/>
</dbReference>
<dbReference type="GO" id="GO:0003735">
    <property type="term" value="F:structural constituent of ribosome"/>
    <property type="evidence" value="ECO:0007669"/>
    <property type="project" value="InterPro"/>
</dbReference>
<dbReference type="GO" id="GO:0006412">
    <property type="term" value="P:translation"/>
    <property type="evidence" value="ECO:0007669"/>
    <property type="project" value="UniProtKB-UniRule"/>
</dbReference>
<dbReference type="FunFam" id="3.30.230.10:FF:000001">
    <property type="entry name" value="30S ribosomal protein S9"/>
    <property type="match status" value="1"/>
</dbReference>
<dbReference type="Gene3D" id="3.30.230.10">
    <property type="match status" value="1"/>
</dbReference>
<dbReference type="HAMAP" id="MF_00532_B">
    <property type="entry name" value="Ribosomal_uS9_B"/>
    <property type="match status" value="1"/>
</dbReference>
<dbReference type="InterPro" id="IPR020568">
    <property type="entry name" value="Ribosomal_Su5_D2-typ_SF"/>
</dbReference>
<dbReference type="InterPro" id="IPR000754">
    <property type="entry name" value="Ribosomal_uS9"/>
</dbReference>
<dbReference type="InterPro" id="IPR023035">
    <property type="entry name" value="Ribosomal_uS9_bac/plastid"/>
</dbReference>
<dbReference type="InterPro" id="IPR020574">
    <property type="entry name" value="Ribosomal_uS9_CS"/>
</dbReference>
<dbReference type="InterPro" id="IPR014721">
    <property type="entry name" value="Ribsml_uS5_D2-typ_fold_subgr"/>
</dbReference>
<dbReference type="NCBIfam" id="NF001099">
    <property type="entry name" value="PRK00132.1"/>
    <property type="match status" value="1"/>
</dbReference>
<dbReference type="PANTHER" id="PTHR21569">
    <property type="entry name" value="RIBOSOMAL PROTEIN S9"/>
    <property type="match status" value="1"/>
</dbReference>
<dbReference type="PANTHER" id="PTHR21569:SF1">
    <property type="entry name" value="SMALL RIBOSOMAL SUBUNIT PROTEIN US9M"/>
    <property type="match status" value="1"/>
</dbReference>
<dbReference type="Pfam" id="PF00380">
    <property type="entry name" value="Ribosomal_S9"/>
    <property type="match status" value="1"/>
</dbReference>
<dbReference type="SUPFAM" id="SSF54211">
    <property type="entry name" value="Ribosomal protein S5 domain 2-like"/>
    <property type="match status" value="1"/>
</dbReference>
<dbReference type="PROSITE" id="PS00360">
    <property type="entry name" value="RIBOSOMAL_S9"/>
    <property type="match status" value="1"/>
</dbReference>
<protein>
    <recommendedName>
        <fullName evidence="1">Small ribosomal subunit protein uS9</fullName>
    </recommendedName>
    <alternativeName>
        <fullName evidence="2">30S ribosomal protein S9</fullName>
    </alternativeName>
</protein>
<evidence type="ECO:0000255" key="1">
    <source>
        <dbReference type="HAMAP-Rule" id="MF_00532"/>
    </source>
</evidence>
<evidence type="ECO:0000305" key="2"/>
<reference key="1">
    <citation type="journal article" date="2006" name="Proc. Natl. Acad. Sci. U.S.A.">
        <title>Molecular genetic anatomy of inter- and intraserotype variation in the human bacterial pathogen group A Streptococcus.</title>
        <authorList>
            <person name="Beres S.B."/>
            <person name="Richter E.W."/>
            <person name="Nagiec M.J."/>
            <person name="Sumby P."/>
            <person name="Porcella S.F."/>
            <person name="DeLeo F.R."/>
            <person name="Musser J.M."/>
        </authorList>
    </citation>
    <scope>NUCLEOTIDE SEQUENCE [LARGE SCALE GENOMIC DNA]</scope>
    <source>
        <strain>MGAS2096</strain>
    </source>
</reference>